<organism>
    <name type="scientific">Pectobacterium atrosepticum (strain SCRI 1043 / ATCC BAA-672)</name>
    <name type="common">Erwinia carotovora subsp. atroseptica</name>
    <dbReference type="NCBI Taxonomy" id="218491"/>
    <lineage>
        <taxon>Bacteria</taxon>
        <taxon>Pseudomonadati</taxon>
        <taxon>Pseudomonadota</taxon>
        <taxon>Gammaproteobacteria</taxon>
        <taxon>Enterobacterales</taxon>
        <taxon>Pectobacteriaceae</taxon>
        <taxon>Pectobacterium</taxon>
    </lineage>
</organism>
<sequence>MIALIQRVSSASVTVEGNIIGEIDKGLLILLGVEQGDDEQKATRLCERVLGYRIFADDDGKMNLNVRQAGGNVLVVSQFTLVADTQRGMRPGFSRGADPSEADRLYQYFVEQCREQGVHTETGQFAADMKVALVNDGPVTFWLQT</sequence>
<keyword id="KW-0963">Cytoplasm</keyword>
<keyword id="KW-0378">Hydrolase</keyword>
<keyword id="KW-1185">Reference proteome</keyword>
<keyword id="KW-0694">RNA-binding</keyword>
<keyword id="KW-0820">tRNA-binding</keyword>
<gene>
    <name evidence="1" type="primary">dtd</name>
    <name type="ordered locus">ECA0032</name>
</gene>
<feature type="chain" id="PRO_0000164541" description="D-aminoacyl-tRNA deacylase">
    <location>
        <begin position="1"/>
        <end position="145"/>
    </location>
</feature>
<feature type="short sequence motif" description="Gly-cisPro motif, important for rejection of L-amino acids" evidence="1">
    <location>
        <begin position="137"/>
        <end position="138"/>
    </location>
</feature>
<dbReference type="EC" id="3.1.1.96" evidence="1"/>
<dbReference type="EMBL" id="BX950851">
    <property type="protein sequence ID" value="CAG72954.1"/>
    <property type="molecule type" value="Genomic_DNA"/>
</dbReference>
<dbReference type="RefSeq" id="WP_011091678.1">
    <property type="nucleotide sequence ID" value="NC_004547.2"/>
</dbReference>
<dbReference type="SMR" id="Q6DB68"/>
<dbReference type="STRING" id="218491.ECA0032"/>
<dbReference type="KEGG" id="eca:ECA0032"/>
<dbReference type="PATRIC" id="fig|218491.5.peg.35"/>
<dbReference type="eggNOG" id="COG1490">
    <property type="taxonomic scope" value="Bacteria"/>
</dbReference>
<dbReference type="HOGENOM" id="CLU_076901_1_0_6"/>
<dbReference type="OrthoDB" id="9801395at2"/>
<dbReference type="Proteomes" id="UP000007966">
    <property type="component" value="Chromosome"/>
</dbReference>
<dbReference type="GO" id="GO:0005737">
    <property type="term" value="C:cytoplasm"/>
    <property type="evidence" value="ECO:0007669"/>
    <property type="project" value="UniProtKB-SubCell"/>
</dbReference>
<dbReference type="GO" id="GO:0051500">
    <property type="term" value="F:D-tyrosyl-tRNA(Tyr) deacylase activity"/>
    <property type="evidence" value="ECO:0007669"/>
    <property type="project" value="TreeGrafter"/>
</dbReference>
<dbReference type="GO" id="GO:0106026">
    <property type="term" value="F:Gly-tRNA(Ala) deacylase activity"/>
    <property type="evidence" value="ECO:0007669"/>
    <property type="project" value="UniProtKB-UniRule"/>
</dbReference>
<dbReference type="GO" id="GO:0043908">
    <property type="term" value="F:Ser(Gly)-tRNA(Ala) hydrolase activity"/>
    <property type="evidence" value="ECO:0007669"/>
    <property type="project" value="UniProtKB-UniRule"/>
</dbReference>
<dbReference type="GO" id="GO:0000049">
    <property type="term" value="F:tRNA binding"/>
    <property type="evidence" value="ECO:0007669"/>
    <property type="project" value="UniProtKB-UniRule"/>
</dbReference>
<dbReference type="GO" id="GO:0019478">
    <property type="term" value="P:D-amino acid catabolic process"/>
    <property type="evidence" value="ECO:0007669"/>
    <property type="project" value="UniProtKB-UniRule"/>
</dbReference>
<dbReference type="CDD" id="cd00563">
    <property type="entry name" value="Dtyr_deacylase"/>
    <property type="match status" value="1"/>
</dbReference>
<dbReference type="FunFam" id="3.50.80.10:FF:000001">
    <property type="entry name" value="D-aminoacyl-tRNA deacylase"/>
    <property type="match status" value="1"/>
</dbReference>
<dbReference type="Gene3D" id="3.50.80.10">
    <property type="entry name" value="D-tyrosyl-tRNA(Tyr) deacylase"/>
    <property type="match status" value="1"/>
</dbReference>
<dbReference type="HAMAP" id="MF_00518">
    <property type="entry name" value="Deacylase_Dtd"/>
    <property type="match status" value="1"/>
</dbReference>
<dbReference type="InterPro" id="IPR003732">
    <property type="entry name" value="Daa-tRNA_deacyls_DTD"/>
</dbReference>
<dbReference type="InterPro" id="IPR023509">
    <property type="entry name" value="DTD-like_sf"/>
</dbReference>
<dbReference type="NCBIfam" id="TIGR00256">
    <property type="entry name" value="D-aminoacyl-tRNA deacylase"/>
    <property type="match status" value="1"/>
</dbReference>
<dbReference type="PANTHER" id="PTHR10472:SF5">
    <property type="entry name" value="D-AMINOACYL-TRNA DEACYLASE 1"/>
    <property type="match status" value="1"/>
</dbReference>
<dbReference type="PANTHER" id="PTHR10472">
    <property type="entry name" value="D-TYROSYL-TRNA TYR DEACYLASE"/>
    <property type="match status" value="1"/>
</dbReference>
<dbReference type="Pfam" id="PF02580">
    <property type="entry name" value="Tyr_Deacylase"/>
    <property type="match status" value="1"/>
</dbReference>
<dbReference type="SUPFAM" id="SSF69500">
    <property type="entry name" value="DTD-like"/>
    <property type="match status" value="1"/>
</dbReference>
<proteinExistence type="inferred from homology"/>
<protein>
    <recommendedName>
        <fullName evidence="1">D-aminoacyl-tRNA deacylase</fullName>
        <shortName evidence="1">DTD</shortName>
        <ecNumber evidence="1">3.1.1.96</ecNumber>
    </recommendedName>
    <alternativeName>
        <fullName evidence="1">Gly-tRNA(Ala) deacylase</fullName>
    </alternativeName>
</protein>
<evidence type="ECO:0000255" key="1">
    <source>
        <dbReference type="HAMAP-Rule" id="MF_00518"/>
    </source>
</evidence>
<reference key="1">
    <citation type="journal article" date="2004" name="Proc. Natl. Acad. Sci. U.S.A.">
        <title>Genome sequence of the enterobacterial phytopathogen Erwinia carotovora subsp. atroseptica and characterization of virulence factors.</title>
        <authorList>
            <person name="Bell K.S."/>
            <person name="Sebaihia M."/>
            <person name="Pritchard L."/>
            <person name="Holden M.T.G."/>
            <person name="Hyman L.J."/>
            <person name="Holeva M.C."/>
            <person name="Thomson N.R."/>
            <person name="Bentley S.D."/>
            <person name="Churcher L.J.C."/>
            <person name="Mungall K."/>
            <person name="Atkin R."/>
            <person name="Bason N."/>
            <person name="Brooks K."/>
            <person name="Chillingworth T."/>
            <person name="Clark K."/>
            <person name="Doggett J."/>
            <person name="Fraser A."/>
            <person name="Hance Z."/>
            <person name="Hauser H."/>
            <person name="Jagels K."/>
            <person name="Moule S."/>
            <person name="Norbertczak H."/>
            <person name="Ormond D."/>
            <person name="Price C."/>
            <person name="Quail M.A."/>
            <person name="Sanders M."/>
            <person name="Walker D."/>
            <person name="Whitehead S."/>
            <person name="Salmond G.P.C."/>
            <person name="Birch P.R.J."/>
            <person name="Parkhill J."/>
            <person name="Toth I.K."/>
        </authorList>
    </citation>
    <scope>NUCLEOTIDE SEQUENCE [LARGE SCALE GENOMIC DNA]</scope>
    <source>
        <strain>SCRI 1043 / ATCC BAA-672</strain>
    </source>
</reference>
<comment type="function">
    <text evidence="1">An aminoacyl-tRNA editing enzyme that deacylates mischarged D-aminoacyl-tRNAs. Also deacylates mischarged glycyl-tRNA(Ala), protecting cells against glycine mischarging by AlaRS. Acts via tRNA-based rather than protein-based catalysis; rejects L-amino acids rather than detecting D-amino acids in the active site. By recycling D-aminoacyl-tRNA to D-amino acids and free tRNA molecules, this enzyme counteracts the toxicity associated with the formation of D-aminoacyl-tRNA entities in vivo and helps enforce protein L-homochirality.</text>
</comment>
<comment type="catalytic activity">
    <reaction evidence="1">
        <text>glycyl-tRNA(Ala) + H2O = tRNA(Ala) + glycine + H(+)</text>
        <dbReference type="Rhea" id="RHEA:53744"/>
        <dbReference type="Rhea" id="RHEA-COMP:9657"/>
        <dbReference type="Rhea" id="RHEA-COMP:13640"/>
        <dbReference type="ChEBI" id="CHEBI:15377"/>
        <dbReference type="ChEBI" id="CHEBI:15378"/>
        <dbReference type="ChEBI" id="CHEBI:57305"/>
        <dbReference type="ChEBI" id="CHEBI:78442"/>
        <dbReference type="ChEBI" id="CHEBI:78522"/>
        <dbReference type="EC" id="3.1.1.96"/>
    </reaction>
</comment>
<comment type="catalytic activity">
    <reaction evidence="1">
        <text>a D-aminoacyl-tRNA + H2O = a tRNA + a D-alpha-amino acid + H(+)</text>
        <dbReference type="Rhea" id="RHEA:13953"/>
        <dbReference type="Rhea" id="RHEA-COMP:10123"/>
        <dbReference type="Rhea" id="RHEA-COMP:10124"/>
        <dbReference type="ChEBI" id="CHEBI:15377"/>
        <dbReference type="ChEBI" id="CHEBI:15378"/>
        <dbReference type="ChEBI" id="CHEBI:59871"/>
        <dbReference type="ChEBI" id="CHEBI:78442"/>
        <dbReference type="ChEBI" id="CHEBI:79333"/>
        <dbReference type="EC" id="3.1.1.96"/>
    </reaction>
</comment>
<comment type="subunit">
    <text evidence="1">Homodimer.</text>
</comment>
<comment type="subcellular location">
    <subcellularLocation>
        <location evidence="1">Cytoplasm</location>
    </subcellularLocation>
</comment>
<comment type="domain">
    <text evidence="1">A Gly-cisPro motif from one monomer fits into the active site of the other monomer to allow specific chiral rejection of L-amino acids.</text>
</comment>
<comment type="similarity">
    <text evidence="1">Belongs to the DTD family.</text>
</comment>
<name>DTD_PECAS</name>
<accession>Q6DB68</accession>